<gene>
    <name type="ordered locus">LMHCC_0787</name>
</gene>
<protein>
    <recommendedName>
        <fullName evidence="1">UPF0316 protein LMHCC_0787</fullName>
    </recommendedName>
</protein>
<sequence>MDNGIFIVATIFVVNILYVTIYTVRLLLTMKGYRYLAALSSVFEMIIYVVALSLVLDNLNNIANVLAYAIGFGVGIIVGMKIEERIALGYITVNVITKEYNLDLPNQIRDLGYGVTSWLASGRDGERMMLEILTQRKNERKLYKHIIEIDSGAFIVSSEPKQIHGGFWVKQVRK</sequence>
<comment type="subcellular location">
    <subcellularLocation>
        <location evidence="1">Cell membrane</location>
        <topology evidence="1">Multi-pass membrane protein</topology>
    </subcellularLocation>
</comment>
<comment type="similarity">
    <text evidence="1">Belongs to the UPF0316 family.</text>
</comment>
<organism>
    <name type="scientific">Listeria monocytogenes serotype 4a (strain HCC23)</name>
    <dbReference type="NCBI Taxonomy" id="552536"/>
    <lineage>
        <taxon>Bacteria</taxon>
        <taxon>Bacillati</taxon>
        <taxon>Bacillota</taxon>
        <taxon>Bacilli</taxon>
        <taxon>Bacillales</taxon>
        <taxon>Listeriaceae</taxon>
        <taxon>Listeria</taxon>
    </lineage>
</organism>
<dbReference type="EMBL" id="CP001175">
    <property type="protein sequence ID" value="ACK39140.1"/>
    <property type="molecule type" value="Genomic_DNA"/>
</dbReference>
<dbReference type="RefSeq" id="WP_003729817.1">
    <property type="nucleotide sequence ID" value="NC_011660.1"/>
</dbReference>
<dbReference type="SMR" id="B8DDY1"/>
<dbReference type="KEGG" id="lmh:LMHCC_0787"/>
<dbReference type="HOGENOM" id="CLU_106166_1_0_9"/>
<dbReference type="GO" id="GO:0005886">
    <property type="term" value="C:plasma membrane"/>
    <property type="evidence" value="ECO:0007669"/>
    <property type="project" value="UniProtKB-SubCell"/>
</dbReference>
<dbReference type="CDD" id="cd16381">
    <property type="entry name" value="YitT_C_like_1"/>
    <property type="match status" value="1"/>
</dbReference>
<dbReference type="HAMAP" id="MF_01515">
    <property type="entry name" value="UPF0316"/>
    <property type="match status" value="1"/>
</dbReference>
<dbReference type="InterPro" id="IPR019264">
    <property type="entry name" value="DUF2179"/>
</dbReference>
<dbReference type="InterPro" id="IPR044035">
    <property type="entry name" value="DUF5698"/>
</dbReference>
<dbReference type="InterPro" id="IPR022930">
    <property type="entry name" value="UPF0316"/>
</dbReference>
<dbReference type="NCBIfam" id="NF003192">
    <property type="entry name" value="PRK04164.1-3"/>
    <property type="match status" value="1"/>
</dbReference>
<dbReference type="NCBIfam" id="NF003194">
    <property type="entry name" value="PRK04164.1-5"/>
    <property type="match status" value="1"/>
</dbReference>
<dbReference type="PANTHER" id="PTHR40060">
    <property type="entry name" value="UPF0316 PROTEIN YEBE"/>
    <property type="match status" value="1"/>
</dbReference>
<dbReference type="PANTHER" id="PTHR40060:SF1">
    <property type="entry name" value="UPF0316 PROTEIN YEBE"/>
    <property type="match status" value="1"/>
</dbReference>
<dbReference type="Pfam" id="PF10035">
    <property type="entry name" value="DUF2179"/>
    <property type="match status" value="1"/>
</dbReference>
<dbReference type="Pfam" id="PF18955">
    <property type="entry name" value="DUF5698"/>
    <property type="match status" value="1"/>
</dbReference>
<evidence type="ECO:0000255" key="1">
    <source>
        <dbReference type="HAMAP-Rule" id="MF_01515"/>
    </source>
</evidence>
<proteinExistence type="inferred from homology"/>
<accession>B8DDY1</accession>
<keyword id="KW-1003">Cell membrane</keyword>
<keyword id="KW-0472">Membrane</keyword>
<keyword id="KW-0812">Transmembrane</keyword>
<keyword id="KW-1133">Transmembrane helix</keyword>
<feature type="chain" id="PRO_1000185073" description="UPF0316 protein LMHCC_0787">
    <location>
        <begin position="1"/>
        <end position="174"/>
    </location>
</feature>
<feature type="transmembrane region" description="Helical" evidence="1">
    <location>
        <begin position="4"/>
        <end position="24"/>
    </location>
</feature>
<feature type="transmembrane region" description="Helical" evidence="1">
    <location>
        <begin position="36"/>
        <end position="56"/>
    </location>
</feature>
<feature type="transmembrane region" description="Helical" evidence="1">
    <location>
        <begin position="62"/>
        <end position="82"/>
    </location>
</feature>
<name>Y787_LISMH</name>
<reference key="1">
    <citation type="journal article" date="2011" name="J. Bacteriol.">
        <title>Genome sequence of lineage III Listeria monocytogenes strain HCC23.</title>
        <authorList>
            <person name="Steele C.L."/>
            <person name="Donaldson J.R."/>
            <person name="Paul D."/>
            <person name="Banes M.M."/>
            <person name="Arick T."/>
            <person name="Bridges S.M."/>
            <person name="Lawrence M.L."/>
        </authorList>
    </citation>
    <scope>NUCLEOTIDE SEQUENCE [LARGE SCALE GENOMIC DNA]</scope>
    <source>
        <strain>HCC23</strain>
    </source>
</reference>